<keyword id="KW-0227">DNA damage</keyword>
<keyword id="KW-0233">DNA recombination</keyword>
<keyword id="KW-0234">DNA repair</keyword>
<keyword id="KW-0235">DNA replication</keyword>
<keyword id="KW-0238">DNA-binding</keyword>
<feature type="chain" id="PRO_0000096123" description="Single-stranded DNA-binding protein 2">
    <location>
        <begin position="1"/>
        <end position="163"/>
    </location>
</feature>
<feature type="domain" description="SSB" evidence="1">
    <location>
        <begin position="1"/>
        <end position="104"/>
    </location>
</feature>
<feature type="region of interest" description="Disordered" evidence="2">
    <location>
        <begin position="109"/>
        <end position="163"/>
    </location>
</feature>
<feature type="short sequence motif" description="Important for interaction with partner proteins" evidence="1">
    <location>
        <begin position="158"/>
        <end position="163"/>
    </location>
</feature>
<feature type="compositionally biased region" description="Low complexity" evidence="2">
    <location>
        <begin position="119"/>
        <end position="130"/>
    </location>
</feature>
<feature type="compositionally biased region" description="Polar residues" evidence="2">
    <location>
        <begin position="131"/>
        <end position="140"/>
    </location>
</feature>
<proteinExistence type="inferred from homology"/>
<accession>Q8NZJ0</accession>
<organism>
    <name type="scientific">Streptococcus pyogenes serotype M18 (strain MGAS8232)</name>
    <dbReference type="NCBI Taxonomy" id="186103"/>
    <lineage>
        <taxon>Bacteria</taxon>
        <taxon>Bacillati</taxon>
        <taxon>Bacillota</taxon>
        <taxon>Bacilli</taxon>
        <taxon>Lactobacillales</taxon>
        <taxon>Streptococcaceae</taxon>
        <taxon>Streptococcus</taxon>
    </lineage>
</organism>
<dbReference type="EMBL" id="AE009949">
    <property type="protein sequence ID" value="AAL98398.1"/>
    <property type="molecule type" value="Genomic_DNA"/>
</dbReference>
<dbReference type="RefSeq" id="WP_002993238.1">
    <property type="nucleotide sequence ID" value="NC_003485.1"/>
</dbReference>
<dbReference type="SMR" id="Q8NZJ0"/>
<dbReference type="KEGG" id="spm:spyM18_1896"/>
<dbReference type="HOGENOM" id="CLU_078758_6_2_9"/>
<dbReference type="GO" id="GO:0009295">
    <property type="term" value="C:nucleoid"/>
    <property type="evidence" value="ECO:0007669"/>
    <property type="project" value="TreeGrafter"/>
</dbReference>
<dbReference type="GO" id="GO:0003697">
    <property type="term" value="F:single-stranded DNA binding"/>
    <property type="evidence" value="ECO:0007669"/>
    <property type="project" value="UniProtKB-UniRule"/>
</dbReference>
<dbReference type="GO" id="GO:0006310">
    <property type="term" value="P:DNA recombination"/>
    <property type="evidence" value="ECO:0007669"/>
    <property type="project" value="UniProtKB-UniRule"/>
</dbReference>
<dbReference type="GO" id="GO:0006281">
    <property type="term" value="P:DNA repair"/>
    <property type="evidence" value="ECO:0007669"/>
    <property type="project" value="UniProtKB-UniRule"/>
</dbReference>
<dbReference type="GO" id="GO:0006260">
    <property type="term" value="P:DNA replication"/>
    <property type="evidence" value="ECO:0007669"/>
    <property type="project" value="UniProtKB-UniRule"/>
</dbReference>
<dbReference type="CDD" id="cd04496">
    <property type="entry name" value="SSB_OBF"/>
    <property type="match status" value="1"/>
</dbReference>
<dbReference type="FunFam" id="2.40.50.140:FF:000084">
    <property type="entry name" value="Single-stranded DNA-binding protein"/>
    <property type="match status" value="1"/>
</dbReference>
<dbReference type="Gene3D" id="2.40.50.140">
    <property type="entry name" value="Nucleic acid-binding proteins"/>
    <property type="match status" value="1"/>
</dbReference>
<dbReference type="HAMAP" id="MF_00984">
    <property type="entry name" value="SSB"/>
    <property type="match status" value="1"/>
</dbReference>
<dbReference type="InterPro" id="IPR012340">
    <property type="entry name" value="NA-bd_OB-fold"/>
</dbReference>
<dbReference type="InterPro" id="IPR000424">
    <property type="entry name" value="Primosome_PriB/ssb"/>
</dbReference>
<dbReference type="InterPro" id="IPR011344">
    <property type="entry name" value="ssDNA-bd"/>
</dbReference>
<dbReference type="NCBIfam" id="NF005580">
    <property type="entry name" value="PRK07275.1"/>
    <property type="match status" value="1"/>
</dbReference>
<dbReference type="NCBIfam" id="TIGR00621">
    <property type="entry name" value="ssb"/>
    <property type="match status" value="1"/>
</dbReference>
<dbReference type="PANTHER" id="PTHR10302">
    <property type="entry name" value="SINGLE-STRANDED DNA-BINDING PROTEIN"/>
    <property type="match status" value="1"/>
</dbReference>
<dbReference type="PANTHER" id="PTHR10302:SF27">
    <property type="entry name" value="SINGLE-STRANDED DNA-BINDING PROTEIN"/>
    <property type="match status" value="1"/>
</dbReference>
<dbReference type="Pfam" id="PF00436">
    <property type="entry name" value="SSB"/>
    <property type="match status" value="1"/>
</dbReference>
<dbReference type="PIRSF" id="PIRSF002070">
    <property type="entry name" value="SSB"/>
    <property type="match status" value="1"/>
</dbReference>
<dbReference type="SUPFAM" id="SSF50249">
    <property type="entry name" value="Nucleic acid-binding proteins"/>
    <property type="match status" value="1"/>
</dbReference>
<dbReference type="PROSITE" id="PS50935">
    <property type="entry name" value="SSB"/>
    <property type="match status" value="1"/>
</dbReference>
<evidence type="ECO:0000255" key="1">
    <source>
        <dbReference type="HAMAP-Rule" id="MF_00984"/>
    </source>
</evidence>
<evidence type="ECO:0000256" key="2">
    <source>
        <dbReference type="SAM" id="MobiDB-lite"/>
    </source>
</evidence>
<reference key="1">
    <citation type="journal article" date="2002" name="Proc. Natl. Acad. Sci. U.S.A.">
        <title>Genome sequence and comparative microarray analysis of serotype M18 group A Streptococcus strains associated with acute rheumatic fever outbreaks.</title>
        <authorList>
            <person name="Smoot J.C."/>
            <person name="Barbian K.D."/>
            <person name="Van Gompel J.J."/>
            <person name="Smoot L.M."/>
            <person name="Chaussee M.S."/>
            <person name="Sylva G.L."/>
            <person name="Sturdevant D.E."/>
            <person name="Ricklefs S.M."/>
            <person name="Porcella S.F."/>
            <person name="Parkins L.D."/>
            <person name="Beres S.B."/>
            <person name="Campbell D.S."/>
            <person name="Smith T.M."/>
            <person name="Zhang Q."/>
            <person name="Kapur V."/>
            <person name="Daly J.A."/>
            <person name="Veasy L.G."/>
            <person name="Musser J.M."/>
        </authorList>
    </citation>
    <scope>NUCLEOTIDE SEQUENCE [LARGE SCALE GENOMIC DNA]</scope>
    <source>
        <strain>MGAS8232</strain>
    </source>
</reference>
<name>SSB2_STRP8</name>
<gene>
    <name type="primary">ssb2</name>
    <name type="ordered locus">spyM18_1896</name>
</gene>
<comment type="function">
    <text evidence="1">Plays an important role in DNA replication, recombination and repair. Binds to ssDNA and to an array of partner proteins to recruit them to their sites of action during DNA metabolism.</text>
</comment>
<comment type="subunit">
    <text evidence="1">Homotetramer.</text>
</comment>
<sequence>MINNVVLVGRMTKDAELRYTPSQVAVATFTLAVNRTFKSQNGEREADFINCVIWRQPAENLANWAKKGALIGITGRIQTRNYENQQGQRVYVTEVVADNFQMLESRATREGGSTGSFNGGFNNNTSSSNSYSAPAQQTPNFGRDDSPFGNSNPMDISDDDLPF</sequence>
<protein>
    <recommendedName>
        <fullName evidence="1">Single-stranded DNA-binding protein 2</fullName>
        <shortName evidence="1">SSB 2</shortName>
    </recommendedName>
</protein>